<feature type="chain" id="PRO_1000025249" description="Co-chaperonin GroES">
    <location>
        <begin position="1"/>
        <end position="95"/>
    </location>
</feature>
<protein>
    <recommendedName>
        <fullName evidence="1">Co-chaperonin GroES</fullName>
    </recommendedName>
    <alternativeName>
        <fullName evidence="1">10 kDa chaperonin</fullName>
    </alternativeName>
    <alternativeName>
        <fullName evidence="1">Chaperonin-10</fullName>
        <shortName evidence="1">Cpn10</shortName>
    </alternativeName>
</protein>
<gene>
    <name evidence="1" type="primary">groES</name>
    <name evidence="1" type="synonym">groS</name>
    <name type="ordered locus">DP0191</name>
</gene>
<proteinExistence type="inferred from homology"/>
<evidence type="ECO:0000255" key="1">
    <source>
        <dbReference type="HAMAP-Rule" id="MF_00580"/>
    </source>
</evidence>
<accession>Q6ARV5</accession>
<name>CH10_DESPS</name>
<keyword id="KW-0143">Chaperone</keyword>
<keyword id="KW-0963">Cytoplasm</keyword>
<keyword id="KW-1185">Reference proteome</keyword>
<dbReference type="EMBL" id="CR522870">
    <property type="protein sequence ID" value="CAG34920.1"/>
    <property type="molecule type" value="Genomic_DNA"/>
</dbReference>
<dbReference type="RefSeq" id="WP_011187436.1">
    <property type="nucleotide sequence ID" value="NC_006138.1"/>
</dbReference>
<dbReference type="SMR" id="Q6ARV5"/>
<dbReference type="STRING" id="177439.DP0191"/>
<dbReference type="KEGG" id="dps:DP0191"/>
<dbReference type="eggNOG" id="COG0234">
    <property type="taxonomic scope" value="Bacteria"/>
</dbReference>
<dbReference type="HOGENOM" id="CLU_132825_2_0_7"/>
<dbReference type="OrthoDB" id="9806791at2"/>
<dbReference type="Proteomes" id="UP000000602">
    <property type="component" value="Chromosome"/>
</dbReference>
<dbReference type="GO" id="GO:0005737">
    <property type="term" value="C:cytoplasm"/>
    <property type="evidence" value="ECO:0007669"/>
    <property type="project" value="UniProtKB-SubCell"/>
</dbReference>
<dbReference type="GO" id="GO:0005524">
    <property type="term" value="F:ATP binding"/>
    <property type="evidence" value="ECO:0007669"/>
    <property type="project" value="InterPro"/>
</dbReference>
<dbReference type="GO" id="GO:0046872">
    <property type="term" value="F:metal ion binding"/>
    <property type="evidence" value="ECO:0007669"/>
    <property type="project" value="TreeGrafter"/>
</dbReference>
<dbReference type="GO" id="GO:0044183">
    <property type="term" value="F:protein folding chaperone"/>
    <property type="evidence" value="ECO:0007669"/>
    <property type="project" value="InterPro"/>
</dbReference>
<dbReference type="GO" id="GO:0051087">
    <property type="term" value="F:protein-folding chaperone binding"/>
    <property type="evidence" value="ECO:0007669"/>
    <property type="project" value="TreeGrafter"/>
</dbReference>
<dbReference type="GO" id="GO:0051082">
    <property type="term" value="F:unfolded protein binding"/>
    <property type="evidence" value="ECO:0007669"/>
    <property type="project" value="TreeGrafter"/>
</dbReference>
<dbReference type="GO" id="GO:0051085">
    <property type="term" value="P:chaperone cofactor-dependent protein refolding"/>
    <property type="evidence" value="ECO:0007669"/>
    <property type="project" value="TreeGrafter"/>
</dbReference>
<dbReference type="CDD" id="cd00320">
    <property type="entry name" value="cpn10"/>
    <property type="match status" value="1"/>
</dbReference>
<dbReference type="FunFam" id="2.30.33.40:FF:000001">
    <property type="entry name" value="10 kDa chaperonin"/>
    <property type="match status" value="1"/>
</dbReference>
<dbReference type="Gene3D" id="2.30.33.40">
    <property type="entry name" value="GroES chaperonin"/>
    <property type="match status" value="1"/>
</dbReference>
<dbReference type="HAMAP" id="MF_00580">
    <property type="entry name" value="CH10"/>
    <property type="match status" value="1"/>
</dbReference>
<dbReference type="InterPro" id="IPR020818">
    <property type="entry name" value="Chaperonin_GroES"/>
</dbReference>
<dbReference type="InterPro" id="IPR037124">
    <property type="entry name" value="Chaperonin_GroES_sf"/>
</dbReference>
<dbReference type="InterPro" id="IPR018369">
    <property type="entry name" value="Chaprnonin_Cpn10_CS"/>
</dbReference>
<dbReference type="InterPro" id="IPR011032">
    <property type="entry name" value="GroES-like_sf"/>
</dbReference>
<dbReference type="NCBIfam" id="NF001527">
    <property type="entry name" value="PRK00364.1-2"/>
    <property type="match status" value="1"/>
</dbReference>
<dbReference type="NCBIfam" id="NF001529">
    <property type="entry name" value="PRK00364.1-5"/>
    <property type="match status" value="1"/>
</dbReference>
<dbReference type="NCBIfam" id="NF001531">
    <property type="entry name" value="PRK00364.2-2"/>
    <property type="match status" value="1"/>
</dbReference>
<dbReference type="NCBIfam" id="NF001533">
    <property type="entry name" value="PRK00364.2-4"/>
    <property type="match status" value="1"/>
</dbReference>
<dbReference type="NCBIfam" id="NF001534">
    <property type="entry name" value="PRK00364.2-5"/>
    <property type="match status" value="1"/>
</dbReference>
<dbReference type="PANTHER" id="PTHR10772">
    <property type="entry name" value="10 KDA HEAT SHOCK PROTEIN"/>
    <property type="match status" value="1"/>
</dbReference>
<dbReference type="PANTHER" id="PTHR10772:SF58">
    <property type="entry name" value="CO-CHAPERONIN GROES"/>
    <property type="match status" value="1"/>
</dbReference>
<dbReference type="Pfam" id="PF00166">
    <property type="entry name" value="Cpn10"/>
    <property type="match status" value="1"/>
</dbReference>
<dbReference type="PRINTS" id="PR00297">
    <property type="entry name" value="CHAPERONIN10"/>
</dbReference>
<dbReference type="SMART" id="SM00883">
    <property type="entry name" value="Cpn10"/>
    <property type="match status" value="1"/>
</dbReference>
<dbReference type="SUPFAM" id="SSF50129">
    <property type="entry name" value="GroES-like"/>
    <property type="match status" value="1"/>
</dbReference>
<dbReference type="PROSITE" id="PS00681">
    <property type="entry name" value="CHAPERONINS_CPN10"/>
    <property type="match status" value="1"/>
</dbReference>
<reference key="1">
    <citation type="journal article" date="2004" name="Environ. Microbiol.">
        <title>The genome of Desulfotalea psychrophila, a sulfate-reducing bacterium from permanently cold Arctic sediments.</title>
        <authorList>
            <person name="Rabus R."/>
            <person name="Ruepp A."/>
            <person name="Frickey T."/>
            <person name="Rattei T."/>
            <person name="Fartmann B."/>
            <person name="Stark M."/>
            <person name="Bauer M."/>
            <person name="Zibat A."/>
            <person name="Lombardot T."/>
            <person name="Becker I."/>
            <person name="Amann J."/>
            <person name="Gellner K."/>
            <person name="Teeling H."/>
            <person name="Leuschner W.D."/>
            <person name="Gloeckner F.-O."/>
            <person name="Lupas A.N."/>
            <person name="Amann R."/>
            <person name="Klenk H.-P."/>
        </authorList>
    </citation>
    <scope>NUCLEOTIDE SEQUENCE [LARGE SCALE GENOMIC DNA]</scope>
    <source>
        <strain>DSM 12343 / LSv54</strain>
    </source>
</reference>
<organism>
    <name type="scientific">Desulfotalea psychrophila (strain LSv54 / DSM 12343)</name>
    <dbReference type="NCBI Taxonomy" id="177439"/>
    <lineage>
        <taxon>Bacteria</taxon>
        <taxon>Pseudomonadati</taxon>
        <taxon>Thermodesulfobacteriota</taxon>
        <taxon>Desulfobulbia</taxon>
        <taxon>Desulfobulbales</taxon>
        <taxon>Desulfocapsaceae</taxon>
        <taxon>Desulfotalea</taxon>
    </lineage>
</organism>
<sequence>MKIRPLNDRLLVKRLAEEEKTAGGIIIPDSAKEKPAEGQVVAVGPGKVSDSGERVALQVKEGDLVLFSKYGGTDVKLDGEDFLIMREDDILGIME</sequence>
<comment type="function">
    <text evidence="1">Together with the chaperonin GroEL, plays an essential role in assisting protein folding. The GroEL-GroES system forms a nano-cage that allows encapsulation of the non-native substrate proteins and provides a physical environment optimized to promote and accelerate protein folding. GroES binds to the apical surface of the GroEL ring, thereby capping the opening of the GroEL channel.</text>
</comment>
<comment type="subunit">
    <text evidence="1">Heptamer of 7 subunits arranged in a ring. Interacts with the chaperonin GroEL.</text>
</comment>
<comment type="subcellular location">
    <subcellularLocation>
        <location evidence="1">Cytoplasm</location>
    </subcellularLocation>
</comment>
<comment type="similarity">
    <text evidence="1">Belongs to the GroES chaperonin family.</text>
</comment>